<organism>
    <name type="scientific">Escherichia coli (strain K12 / DH10B)</name>
    <dbReference type="NCBI Taxonomy" id="316385"/>
    <lineage>
        <taxon>Bacteria</taxon>
        <taxon>Pseudomonadati</taxon>
        <taxon>Pseudomonadota</taxon>
        <taxon>Gammaproteobacteria</taxon>
        <taxon>Enterobacterales</taxon>
        <taxon>Enterobacteriaceae</taxon>
        <taxon>Escherichia</taxon>
    </lineage>
</organism>
<accession>B1X797</accession>
<name>6PGL_ECODH</name>
<proteinExistence type="inferred from homology"/>
<protein>
    <recommendedName>
        <fullName evidence="1">6-phosphogluconolactonase</fullName>
        <shortName evidence="1">6-P-gluconolactonase</shortName>
        <ecNumber evidence="1">3.1.1.31</ecNumber>
    </recommendedName>
</protein>
<reference key="1">
    <citation type="journal article" date="2008" name="J. Bacteriol.">
        <title>The complete genome sequence of Escherichia coli DH10B: insights into the biology of a laboratory workhorse.</title>
        <authorList>
            <person name="Durfee T."/>
            <person name="Nelson R."/>
            <person name="Baldwin S."/>
            <person name="Plunkett G. III"/>
            <person name="Burland V."/>
            <person name="Mau B."/>
            <person name="Petrosino J.F."/>
            <person name="Qin X."/>
            <person name="Muzny D.M."/>
            <person name="Ayele M."/>
            <person name="Gibbs R.A."/>
            <person name="Csorgo B."/>
            <person name="Posfai G."/>
            <person name="Weinstock G.M."/>
            <person name="Blattner F.R."/>
        </authorList>
    </citation>
    <scope>NUCLEOTIDE SEQUENCE [LARGE SCALE GENOMIC DNA]</scope>
    <source>
        <strain>K12 / DH10B</strain>
    </source>
</reference>
<sequence>MKQTVYIASPESQQIHVWNLNHEGALTLTQVVDVPGQVQPMVVSPDKRYLYVGVRPEFRVLAYRIAPDDGALTFAAESALPGSPTHISTDHQGQFVFVGSYNAGNVSVTRLEDGLPVGVVDVVEGLDGCHSANISPDNRTLWVPALKQDRICLFTVSDDGHLVAQDPAEVTTVEGAGPRHMVFHPNEQYAYCVNELNSSVDVWELKDPHGNIECVQTLDMMPENFSDTRWAADIHITPDGRHLYACDRTASLITVFSVSEDGSVLSKEGFQPTETQPRGFNVDHSGKYLIAAGQKSHHISVYEIVGEQGLLHEKGRYAVGQGPMWVVVNAH</sequence>
<keyword id="KW-0007">Acetylation</keyword>
<keyword id="KW-0119">Carbohydrate metabolism</keyword>
<keyword id="KW-0313">Glucose metabolism</keyword>
<keyword id="KW-0378">Hydrolase</keyword>
<evidence type="ECO:0000255" key="1">
    <source>
        <dbReference type="HAMAP-Rule" id="MF_01605"/>
    </source>
</evidence>
<dbReference type="EC" id="3.1.1.31" evidence="1"/>
<dbReference type="EMBL" id="CP000948">
    <property type="protein sequence ID" value="ACB01968.1"/>
    <property type="molecule type" value="Genomic_DNA"/>
</dbReference>
<dbReference type="RefSeq" id="WP_000815435.1">
    <property type="nucleotide sequence ID" value="NC_010473.1"/>
</dbReference>
<dbReference type="SMR" id="B1X797"/>
<dbReference type="GeneID" id="86945650"/>
<dbReference type="KEGG" id="ecd:ECDH10B_0835"/>
<dbReference type="HOGENOM" id="CLU_038716_2_0_6"/>
<dbReference type="UniPathway" id="UPA00115">
    <property type="reaction ID" value="UER00409"/>
</dbReference>
<dbReference type="GO" id="GO:0005829">
    <property type="term" value="C:cytosol"/>
    <property type="evidence" value="ECO:0007669"/>
    <property type="project" value="TreeGrafter"/>
</dbReference>
<dbReference type="GO" id="GO:0017057">
    <property type="term" value="F:6-phosphogluconolactonase activity"/>
    <property type="evidence" value="ECO:0007669"/>
    <property type="project" value="UniProtKB-UniRule"/>
</dbReference>
<dbReference type="GO" id="GO:0006006">
    <property type="term" value="P:glucose metabolic process"/>
    <property type="evidence" value="ECO:0007669"/>
    <property type="project" value="UniProtKB-KW"/>
</dbReference>
<dbReference type="GO" id="GO:0009051">
    <property type="term" value="P:pentose-phosphate shunt, oxidative branch"/>
    <property type="evidence" value="ECO:0007669"/>
    <property type="project" value="UniProtKB-UniRule"/>
</dbReference>
<dbReference type="FunFam" id="2.130.10.10:FF:000051">
    <property type="entry name" value="6-phosphogluconolactonase"/>
    <property type="match status" value="1"/>
</dbReference>
<dbReference type="Gene3D" id="2.130.10.10">
    <property type="entry name" value="YVTN repeat-like/Quinoprotein amine dehydrogenase"/>
    <property type="match status" value="1"/>
</dbReference>
<dbReference type="HAMAP" id="MF_01605">
    <property type="entry name" value="6P_gluconolactonase"/>
    <property type="match status" value="1"/>
</dbReference>
<dbReference type="InterPro" id="IPR022528">
    <property type="entry name" value="6-phosphogluconolactonase_YbhE"/>
</dbReference>
<dbReference type="InterPro" id="IPR050282">
    <property type="entry name" value="Cycloisomerase_2"/>
</dbReference>
<dbReference type="InterPro" id="IPR019405">
    <property type="entry name" value="Lactonase_7-beta_prop"/>
</dbReference>
<dbReference type="InterPro" id="IPR011045">
    <property type="entry name" value="N2O_reductase_N"/>
</dbReference>
<dbReference type="InterPro" id="IPR015943">
    <property type="entry name" value="WD40/YVTN_repeat-like_dom_sf"/>
</dbReference>
<dbReference type="NCBIfam" id="NF008258">
    <property type="entry name" value="PRK11028.1"/>
    <property type="match status" value="1"/>
</dbReference>
<dbReference type="PANTHER" id="PTHR30344:SF1">
    <property type="entry name" value="6-PHOSPHOGLUCONOLACTONASE"/>
    <property type="match status" value="1"/>
</dbReference>
<dbReference type="PANTHER" id="PTHR30344">
    <property type="entry name" value="6-PHOSPHOGLUCONOLACTONASE-RELATED"/>
    <property type="match status" value="1"/>
</dbReference>
<dbReference type="Pfam" id="PF10282">
    <property type="entry name" value="Lactonase"/>
    <property type="match status" value="1"/>
</dbReference>
<dbReference type="SUPFAM" id="SSF50974">
    <property type="entry name" value="Nitrous oxide reductase, N-terminal domain"/>
    <property type="match status" value="1"/>
</dbReference>
<comment type="function">
    <text evidence="1">Catalyzes the hydrolysis of 6-phosphogluconolactone to 6-phosphogluconate.</text>
</comment>
<comment type="catalytic activity">
    <reaction evidence="1">
        <text>6-phospho-D-glucono-1,5-lactone + H2O = 6-phospho-D-gluconate + H(+)</text>
        <dbReference type="Rhea" id="RHEA:12556"/>
        <dbReference type="ChEBI" id="CHEBI:15377"/>
        <dbReference type="ChEBI" id="CHEBI:15378"/>
        <dbReference type="ChEBI" id="CHEBI:57955"/>
        <dbReference type="ChEBI" id="CHEBI:58759"/>
        <dbReference type="EC" id="3.1.1.31"/>
    </reaction>
</comment>
<comment type="pathway">
    <text evidence="1">Carbohydrate degradation; pentose phosphate pathway; D-ribulose 5-phosphate from D-glucose 6-phosphate (oxidative stage): step 2/3.</text>
</comment>
<comment type="similarity">
    <text evidence="1">Belongs to the cycloisomerase 2 family.</text>
</comment>
<feature type="chain" id="PRO_1000148154" description="6-phosphogluconolactonase">
    <location>
        <begin position="1"/>
        <end position="331"/>
    </location>
</feature>
<feature type="modified residue" description="N6-acetyllysine" evidence="1">
    <location>
        <position position="287"/>
    </location>
</feature>
<gene>
    <name evidence="1" type="primary">pgl</name>
    <name type="ordered locus">ECDH10B_0835</name>
</gene>